<feature type="chain" id="PRO_0000102220" description="Endonuclease III">
    <location>
        <begin position="1"/>
        <end position="210"/>
    </location>
</feature>
<feature type="domain" description="HhH" evidence="1">
    <location>
        <begin position="108"/>
        <end position="127"/>
    </location>
</feature>
<feature type="binding site" evidence="1">
    <location>
        <position position="187"/>
    </location>
    <ligand>
        <name>[4Fe-4S] cluster</name>
        <dbReference type="ChEBI" id="CHEBI:49883"/>
    </ligand>
</feature>
<feature type="binding site" evidence="1">
    <location>
        <position position="194"/>
    </location>
    <ligand>
        <name>[4Fe-4S] cluster</name>
        <dbReference type="ChEBI" id="CHEBI:49883"/>
    </ligand>
</feature>
<feature type="binding site" evidence="1">
    <location>
        <position position="197"/>
    </location>
    <ligand>
        <name>[4Fe-4S] cluster</name>
        <dbReference type="ChEBI" id="CHEBI:49883"/>
    </ligand>
</feature>
<feature type="binding site" evidence="1">
    <location>
        <position position="203"/>
    </location>
    <ligand>
        <name>[4Fe-4S] cluster</name>
        <dbReference type="ChEBI" id="CHEBI:49883"/>
    </ligand>
</feature>
<comment type="function">
    <text evidence="1">DNA repair enzyme that has both DNA N-glycosylase activity and AP-lyase activity. The DNA N-glycosylase activity releases various damaged pyrimidines from DNA by cleaving the N-glycosidic bond, leaving an AP (apurinic/apyrimidinic) site. The AP-lyase activity cleaves the phosphodiester bond 3' to the AP site by a beta-elimination, leaving a 3'-terminal unsaturated sugar and a product with a terminal 5'-phosphate.</text>
</comment>
<comment type="catalytic activity">
    <reaction evidence="1">
        <text>2'-deoxyribonucleotide-(2'-deoxyribose 5'-phosphate)-2'-deoxyribonucleotide-DNA = a 3'-end 2'-deoxyribonucleotide-(2,3-dehydro-2,3-deoxyribose 5'-phosphate)-DNA + a 5'-end 5'-phospho-2'-deoxyribonucleoside-DNA + H(+)</text>
        <dbReference type="Rhea" id="RHEA:66592"/>
        <dbReference type="Rhea" id="RHEA-COMP:13180"/>
        <dbReference type="Rhea" id="RHEA-COMP:16897"/>
        <dbReference type="Rhea" id="RHEA-COMP:17067"/>
        <dbReference type="ChEBI" id="CHEBI:15378"/>
        <dbReference type="ChEBI" id="CHEBI:136412"/>
        <dbReference type="ChEBI" id="CHEBI:157695"/>
        <dbReference type="ChEBI" id="CHEBI:167181"/>
        <dbReference type="EC" id="4.2.99.18"/>
    </reaction>
</comment>
<comment type="cofactor">
    <cofactor evidence="1">
        <name>[4Fe-4S] cluster</name>
        <dbReference type="ChEBI" id="CHEBI:49883"/>
    </cofactor>
    <text evidence="1">Binds 1 [4Fe-4S] cluster.</text>
</comment>
<comment type="similarity">
    <text evidence="1">Belongs to the Nth/MutY family.</text>
</comment>
<evidence type="ECO:0000255" key="1">
    <source>
        <dbReference type="HAMAP-Rule" id="MF_00942"/>
    </source>
</evidence>
<protein>
    <recommendedName>
        <fullName evidence="1">Endonuclease III</fullName>
        <ecNumber evidence="1">4.2.99.18</ecNumber>
    </recommendedName>
    <alternativeName>
        <fullName evidence="1">DNA-(apurinic or apyrimidinic site) lyase</fullName>
    </alternativeName>
</protein>
<reference key="1">
    <citation type="journal article" date="2001" name="Science">
        <title>Mechanisms of evolution in Rickettsia conorii and R. prowazekii.</title>
        <authorList>
            <person name="Ogata H."/>
            <person name="Audic S."/>
            <person name="Renesto-Audiffren P."/>
            <person name="Fournier P.-E."/>
            <person name="Barbe V."/>
            <person name="Samson D."/>
            <person name="Roux V."/>
            <person name="Cossart P."/>
            <person name="Weissenbach J."/>
            <person name="Claverie J.-M."/>
            <person name="Raoult D."/>
        </authorList>
    </citation>
    <scope>NUCLEOTIDE SEQUENCE [LARGE SCALE GENOMIC DNA]</scope>
    <source>
        <strain>ATCC VR-613 / Malish 7</strain>
    </source>
</reference>
<gene>
    <name evidence="1" type="primary">nth</name>
    <name type="ordered locus">RC1149</name>
</gene>
<name>END3_RICCN</name>
<keyword id="KW-0004">4Fe-4S</keyword>
<keyword id="KW-0227">DNA damage</keyword>
<keyword id="KW-0234">DNA repair</keyword>
<keyword id="KW-0238">DNA-binding</keyword>
<keyword id="KW-0326">Glycosidase</keyword>
<keyword id="KW-0378">Hydrolase</keyword>
<keyword id="KW-0408">Iron</keyword>
<keyword id="KW-0411">Iron-sulfur</keyword>
<keyword id="KW-0456">Lyase</keyword>
<keyword id="KW-0479">Metal-binding</keyword>
<organism>
    <name type="scientific">Rickettsia conorii (strain ATCC VR-613 / Malish 7)</name>
    <dbReference type="NCBI Taxonomy" id="272944"/>
    <lineage>
        <taxon>Bacteria</taxon>
        <taxon>Pseudomonadati</taxon>
        <taxon>Pseudomonadota</taxon>
        <taxon>Alphaproteobacteria</taxon>
        <taxon>Rickettsiales</taxon>
        <taxon>Rickettsiaceae</taxon>
        <taxon>Rickettsieae</taxon>
        <taxon>Rickettsia</taxon>
        <taxon>spotted fever group</taxon>
    </lineage>
</organism>
<accession>Q92GH4</accession>
<dbReference type="EC" id="4.2.99.18" evidence="1"/>
<dbReference type="EMBL" id="AE006914">
    <property type="protein sequence ID" value="AAL03687.1"/>
    <property type="molecule type" value="Genomic_DNA"/>
</dbReference>
<dbReference type="PIR" id="E97843">
    <property type="entry name" value="E97843"/>
</dbReference>
<dbReference type="RefSeq" id="WP_010977720.1">
    <property type="nucleotide sequence ID" value="NC_003103.1"/>
</dbReference>
<dbReference type="SMR" id="Q92GH4"/>
<dbReference type="GeneID" id="928298"/>
<dbReference type="KEGG" id="rco:RC1149"/>
<dbReference type="PATRIC" id="fig|272944.4.peg.1323"/>
<dbReference type="HOGENOM" id="CLU_012862_3_0_5"/>
<dbReference type="Proteomes" id="UP000000816">
    <property type="component" value="Chromosome"/>
</dbReference>
<dbReference type="GO" id="GO:0051539">
    <property type="term" value="F:4 iron, 4 sulfur cluster binding"/>
    <property type="evidence" value="ECO:0007669"/>
    <property type="project" value="UniProtKB-UniRule"/>
</dbReference>
<dbReference type="GO" id="GO:0140078">
    <property type="term" value="F:class I DNA-(apurinic or apyrimidinic site) endonuclease activity"/>
    <property type="evidence" value="ECO:0007669"/>
    <property type="project" value="UniProtKB-EC"/>
</dbReference>
<dbReference type="GO" id="GO:0003677">
    <property type="term" value="F:DNA binding"/>
    <property type="evidence" value="ECO:0007669"/>
    <property type="project" value="UniProtKB-UniRule"/>
</dbReference>
<dbReference type="GO" id="GO:0019104">
    <property type="term" value="F:DNA N-glycosylase activity"/>
    <property type="evidence" value="ECO:0007669"/>
    <property type="project" value="UniProtKB-UniRule"/>
</dbReference>
<dbReference type="GO" id="GO:0046872">
    <property type="term" value="F:metal ion binding"/>
    <property type="evidence" value="ECO:0007669"/>
    <property type="project" value="UniProtKB-KW"/>
</dbReference>
<dbReference type="GO" id="GO:0006285">
    <property type="term" value="P:base-excision repair, AP site formation"/>
    <property type="evidence" value="ECO:0007669"/>
    <property type="project" value="TreeGrafter"/>
</dbReference>
<dbReference type="CDD" id="cd00056">
    <property type="entry name" value="ENDO3c"/>
    <property type="match status" value="1"/>
</dbReference>
<dbReference type="FunFam" id="1.10.1670.10:FF:000001">
    <property type="entry name" value="Endonuclease III"/>
    <property type="match status" value="1"/>
</dbReference>
<dbReference type="FunFam" id="1.10.340.30:FF:000001">
    <property type="entry name" value="Endonuclease III"/>
    <property type="match status" value="1"/>
</dbReference>
<dbReference type="Gene3D" id="1.10.1670.10">
    <property type="entry name" value="Helix-hairpin-Helix base-excision DNA repair enzymes (C-terminal)"/>
    <property type="match status" value="1"/>
</dbReference>
<dbReference type="Gene3D" id="1.10.340.30">
    <property type="entry name" value="Hypothetical protein, domain 2"/>
    <property type="match status" value="1"/>
</dbReference>
<dbReference type="HAMAP" id="MF_00942">
    <property type="entry name" value="Nth"/>
    <property type="match status" value="1"/>
</dbReference>
<dbReference type="InterPro" id="IPR011257">
    <property type="entry name" value="DNA_glycosylase"/>
</dbReference>
<dbReference type="InterPro" id="IPR004036">
    <property type="entry name" value="Endonuclease-III-like_CS2"/>
</dbReference>
<dbReference type="InterPro" id="IPR003651">
    <property type="entry name" value="Endonuclease3_FeS-loop_motif"/>
</dbReference>
<dbReference type="InterPro" id="IPR003265">
    <property type="entry name" value="HhH-GPD_domain"/>
</dbReference>
<dbReference type="InterPro" id="IPR023170">
    <property type="entry name" value="HhH_base_excis_C"/>
</dbReference>
<dbReference type="InterPro" id="IPR000445">
    <property type="entry name" value="HhH_motif"/>
</dbReference>
<dbReference type="InterPro" id="IPR005759">
    <property type="entry name" value="Nth"/>
</dbReference>
<dbReference type="NCBIfam" id="TIGR01083">
    <property type="entry name" value="nth"/>
    <property type="match status" value="1"/>
</dbReference>
<dbReference type="PANTHER" id="PTHR10359">
    <property type="entry name" value="A/G-SPECIFIC ADENINE GLYCOSYLASE/ENDONUCLEASE III"/>
    <property type="match status" value="1"/>
</dbReference>
<dbReference type="PANTHER" id="PTHR10359:SF18">
    <property type="entry name" value="ENDONUCLEASE III"/>
    <property type="match status" value="1"/>
</dbReference>
<dbReference type="Pfam" id="PF10576">
    <property type="entry name" value="EndIII_4Fe-2S"/>
    <property type="match status" value="1"/>
</dbReference>
<dbReference type="Pfam" id="PF00633">
    <property type="entry name" value="HHH"/>
    <property type="match status" value="1"/>
</dbReference>
<dbReference type="Pfam" id="PF00730">
    <property type="entry name" value="HhH-GPD"/>
    <property type="match status" value="1"/>
</dbReference>
<dbReference type="PIRSF" id="PIRSF001435">
    <property type="entry name" value="Nth"/>
    <property type="match status" value="1"/>
</dbReference>
<dbReference type="SMART" id="SM00478">
    <property type="entry name" value="ENDO3c"/>
    <property type="match status" value="1"/>
</dbReference>
<dbReference type="SMART" id="SM00525">
    <property type="entry name" value="FES"/>
    <property type="match status" value="1"/>
</dbReference>
<dbReference type="SUPFAM" id="SSF48150">
    <property type="entry name" value="DNA-glycosylase"/>
    <property type="match status" value="1"/>
</dbReference>
<dbReference type="PROSITE" id="PS01155">
    <property type="entry name" value="ENDONUCLEASE_III_2"/>
    <property type="match status" value="1"/>
</dbReference>
<sequence>MQAQIVNKIFEIFSKNNPNPKTELIYKNDFTLLVAVILSAQATDISVNLATKSLFATYDTPEKILELGEEGLKKYIKSIGLFNSKAKNIIALCKILISNYQASVPNDFKALIKLPGVGRKTANVVLNCLFGMPTMAVDTHVFRVANRIGLAKGDTPEIVENELLQIIDTKWLTHAHHWLILHGRYICKARKPDCDICPIKEYCDYYFNLK</sequence>
<proteinExistence type="inferred from homology"/>